<sequence>MAFADYPVQSLMYITNRPEIVFTEGKGSWLTDHNGKRYLDFVQGWAVNCLGHSNDGMIEALNAQAKKLINPSPAFYNEPMAKLAGLLSAHSCFDKVFFANSGAEANEGAIKLARKWGKKHKSGAGKNRFEIITFDHSFHGRTLATMSASGKAGWDTIFAPQVPGFPKAILNDIASVEALITDETVGVMLEPVQGEGGVLPATQEFMQQLRALTRKHKLLLIVDEVQAGCGRCGTLFAYQLSNIEPDIMTLGKGIGGGVPLSALLCTDEVASFEAGDQGGTYNGNPLMTAVGCSVIEQLLAPGFLAGVQERGAYLRAQLLELSEAFGLAGERGEGLLRALLLGKDIGGQLVEAAREMNPTGLLLNAPRPNILRFMPALNVTTDEIDTMIGMLRTLLKAHG</sequence>
<evidence type="ECO:0000255" key="1">
    <source>
        <dbReference type="HAMAP-Rule" id="MF_01107"/>
    </source>
</evidence>
<keyword id="KW-0028">Amino-acid biosynthesis</keyword>
<keyword id="KW-0032">Aminotransferase</keyword>
<keyword id="KW-0055">Arginine biosynthesis</keyword>
<keyword id="KW-0963">Cytoplasm</keyword>
<keyword id="KW-0663">Pyridoxal phosphate</keyword>
<keyword id="KW-1185">Reference proteome</keyword>
<keyword id="KW-0808">Transferase</keyword>
<proteinExistence type="inferred from homology"/>
<accession>Q8XWN8</accession>
<organism>
    <name type="scientific">Ralstonia nicotianae (strain ATCC BAA-1114 / GMI1000)</name>
    <name type="common">Ralstonia solanacearum</name>
    <dbReference type="NCBI Taxonomy" id="267608"/>
    <lineage>
        <taxon>Bacteria</taxon>
        <taxon>Pseudomonadati</taxon>
        <taxon>Pseudomonadota</taxon>
        <taxon>Betaproteobacteria</taxon>
        <taxon>Burkholderiales</taxon>
        <taxon>Burkholderiaceae</taxon>
        <taxon>Ralstonia</taxon>
        <taxon>Ralstonia solanacearum species complex</taxon>
    </lineage>
</organism>
<name>ARGD_RALN1</name>
<comment type="catalytic activity">
    <reaction evidence="1">
        <text>N(2)-acetyl-L-ornithine + 2-oxoglutarate = N-acetyl-L-glutamate 5-semialdehyde + L-glutamate</text>
        <dbReference type="Rhea" id="RHEA:18049"/>
        <dbReference type="ChEBI" id="CHEBI:16810"/>
        <dbReference type="ChEBI" id="CHEBI:29123"/>
        <dbReference type="ChEBI" id="CHEBI:29985"/>
        <dbReference type="ChEBI" id="CHEBI:57805"/>
        <dbReference type="EC" id="2.6.1.11"/>
    </reaction>
</comment>
<comment type="cofactor">
    <cofactor evidence="1">
        <name>pyridoxal 5'-phosphate</name>
        <dbReference type="ChEBI" id="CHEBI:597326"/>
    </cofactor>
    <text evidence="1">Binds 1 pyridoxal phosphate per subunit.</text>
</comment>
<comment type="pathway">
    <text evidence="1">Amino-acid biosynthesis; L-arginine biosynthesis; N(2)-acetyl-L-ornithine from L-glutamate: step 4/4.</text>
</comment>
<comment type="subunit">
    <text evidence="1">Homodimer.</text>
</comment>
<comment type="subcellular location">
    <subcellularLocation>
        <location evidence="1">Cytoplasm</location>
    </subcellularLocation>
</comment>
<comment type="miscellaneous">
    <text evidence="1">May also have succinyldiaminopimelate aminotransferase activity, thus carrying out the corresponding step in lysine biosynthesis.</text>
</comment>
<comment type="similarity">
    <text evidence="1">Belongs to the class-III pyridoxal-phosphate-dependent aminotransferase family. ArgD subfamily.</text>
</comment>
<reference key="1">
    <citation type="journal article" date="2002" name="Nature">
        <title>Genome sequence of the plant pathogen Ralstonia solanacearum.</title>
        <authorList>
            <person name="Salanoubat M."/>
            <person name="Genin S."/>
            <person name="Artiguenave F."/>
            <person name="Gouzy J."/>
            <person name="Mangenot S."/>
            <person name="Arlat M."/>
            <person name="Billault A."/>
            <person name="Brottier P."/>
            <person name="Camus J.-C."/>
            <person name="Cattolico L."/>
            <person name="Chandler M."/>
            <person name="Choisne N."/>
            <person name="Claudel-Renard C."/>
            <person name="Cunnac S."/>
            <person name="Demange N."/>
            <person name="Gaspin C."/>
            <person name="Lavie M."/>
            <person name="Moisan A."/>
            <person name="Robert C."/>
            <person name="Saurin W."/>
            <person name="Schiex T."/>
            <person name="Siguier P."/>
            <person name="Thebault P."/>
            <person name="Whalen M."/>
            <person name="Wincker P."/>
            <person name="Levy M."/>
            <person name="Weissenbach J."/>
            <person name="Boucher C.A."/>
        </authorList>
    </citation>
    <scope>NUCLEOTIDE SEQUENCE [LARGE SCALE GENOMIC DNA]</scope>
    <source>
        <strain>ATCC BAA-1114 / GMI1000</strain>
    </source>
</reference>
<feature type="chain" id="PRO_0000112772" description="Acetylornithine aminotransferase">
    <location>
        <begin position="1"/>
        <end position="399"/>
    </location>
</feature>
<feature type="binding site" evidence="1">
    <location>
        <begin position="102"/>
        <end position="103"/>
    </location>
    <ligand>
        <name>pyridoxal 5'-phosphate</name>
        <dbReference type="ChEBI" id="CHEBI:597326"/>
    </ligand>
</feature>
<feature type="binding site" evidence="1">
    <location>
        <position position="138"/>
    </location>
    <ligand>
        <name>pyridoxal 5'-phosphate</name>
        <dbReference type="ChEBI" id="CHEBI:597326"/>
    </ligand>
</feature>
<feature type="binding site" evidence="1">
    <location>
        <position position="141"/>
    </location>
    <ligand>
        <name>N(2)-acetyl-L-ornithine</name>
        <dbReference type="ChEBI" id="CHEBI:57805"/>
    </ligand>
</feature>
<feature type="binding site" evidence="1">
    <location>
        <begin position="223"/>
        <end position="226"/>
    </location>
    <ligand>
        <name>pyridoxal 5'-phosphate</name>
        <dbReference type="ChEBI" id="CHEBI:597326"/>
    </ligand>
</feature>
<feature type="binding site" evidence="1">
    <location>
        <position position="280"/>
    </location>
    <ligand>
        <name>pyridoxal 5'-phosphate</name>
        <dbReference type="ChEBI" id="CHEBI:597326"/>
    </ligand>
</feature>
<feature type="modified residue" description="N6-(pyridoxal phosphate)lysine" evidence="1">
    <location>
        <position position="252"/>
    </location>
</feature>
<dbReference type="EC" id="2.6.1.11" evidence="1"/>
<dbReference type="EMBL" id="AL646052">
    <property type="protein sequence ID" value="CAD16142.1"/>
    <property type="molecule type" value="Genomic_DNA"/>
</dbReference>
<dbReference type="RefSeq" id="WP_011002354.1">
    <property type="nucleotide sequence ID" value="NC_003295.1"/>
</dbReference>
<dbReference type="SMR" id="Q8XWN8"/>
<dbReference type="STRING" id="267608.RSc2435"/>
<dbReference type="EnsemblBacteria" id="CAD16142">
    <property type="protein sequence ID" value="CAD16142"/>
    <property type="gene ID" value="RSc2435"/>
</dbReference>
<dbReference type="KEGG" id="rso:RSc2435"/>
<dbReference type="PATRIC" id="fig|267608.8.peg.2478"/>
<dbReference type="eggNOG" id="COG4992">
    <property type="taxonomic scope" value="Bacteria"/>
</dbReference>
<dbReference type="HOGENOM" id="CLU_016922_10_1_4"/>
<dbReference type="UniPathway" id="UPA00068">
    <property type="reaction ID" value="UER00109"/>
</dbReference>
<dbReference type="Proteomes" id="UP000001436">
    <property type="component" value="Chromosome"/>
</dbReference>
<dbReference type="GO" id="GO:0005737">
    <property type="term" value="C:cytoplasm"/>
    <property type="evidence" value="ECO:0007669"/>
    <property type="project" value="UniProtKB-SubCell"/>
</dbReference>
<dbReference type="GO" id="GO:0042802">
    <property type="term" value="F:identical protein binding"/>
    <property type="evidence" value="ECO:0007669"/>
    <property type="project" value="TreeGrafter"/>
</dbReference>
<dbReference type="GO" id="GO:0003992">
    <property type="term" value="F:N2-acetyl-L-ornithine:2-oxoglutarate 5-aminotransferase activity"/>
    <property type="evidence" value="ECO:0007669"/>
    <property type="project" value="UniProtKB-UniRule"/>
</dbReference>
<dbReference type="GO" id="GO:0030170">
    <property type="term" value="F:pyridoxal phosphate binding"/>
    <property type="evidence" value="ECO:0007669"/>
    <property type="project" value="InterPro"/>
</dbReference>
<dbReference type="GO" id="GO:0006526">
    <property type="term" value="P:L-arginine biosynthetic process"/>
    <property type="evidence" value="ECO:0007669"/>
    <property type="project" value="UniProtKB-UniRule"/>
</dbReference>
<dbReference type="CDD" id="cd00610">
    <property type="entry name" value="OAT_like"/>
    <property type="match status" value="1"/>
</dbReference>
<dbReference type="FunFam" id="3.40.640.10:FF:000004">
    <property type="entry name" value="Acetylornithine aminotransferase"/>
    <property type="match status" value="1"/>
</dbReference>
<dbReference type="Gene3D" id="3.90.1150.10">
    <property type="entry name" value="Aspartate Aminotransferase, domain 1"/>
    <property type="match status" value="1"/>
</dbReference>
<dbReference type="Gene3D" id="3.40.640.10">
    <property type="entry name" value="Type I PLP-dependent aspartate aminotransferase-like (Major domain)"/>
    <property type="match status" value="1"/>
</dbReference>
<dbReference type="HAMAP" id="MF_01107">
    <property type="entry name" value="ArgD_aminotrans_3"/>
    <property type="match status" value="1"/>
</dbReference>
<dbReference type="InterPro" id="IPR004636">
    <property type="entry name" value="AcOrn/SuccOrn_fam"/>
</dbReference>
<dbReference type="InterPro" id="IPR005814">
    <property type="entry name" value="Aminotrans_3"/>
</dbReference>
<dbReference type="InterPro" id="IPR049704">
    <property type="entry name" value="Aminotrans_3_PPA_site"/>
</dbReference>
<dbReference type="InterPro" id="IPR050103">
    <property type="entry name" value="Class-III_PLP-dep_AT"/>
</dbReference>
<dbReference type="InterPro" id="IPR015424">
    <property type="entry name" value="PyrdxlP-dep_Trfase"/>
</dbReference>
<dbReference type="InterPro" id="IPR015421">
    <property type="entry name" value="PyrdxlP-dep_Trfase_major"/>
</dbReference>
<dbReference type="InterPro" id="IPR015422">
    <property type="entry name" value="PyrdxlP-dep_Trfase_small"/>
</dbReference>
<dbReference type="NCBIfam" id="NF002325">
    <property type="entry name" value="PRK01278.1"/>
    <property type="match status" value="1"/>
</dbReference>
<dbReference type="NCBIfam" id="NF002985">
    <property type="entry name" value="PRK03715.1"/>
    <property type="match status" value="1"/>
</dbReference>
<dbReference type="PANTHER" id="PTHR11986:SF79">
    <property type="entry name" value="ACETYLORNITHINE AMINOTRANSFERASE, MITOCHONDRIAL"/>
    <property type="match status" value="1"/>
</dbReference>
<dbReference type="PANTHER" id="PTHR11986">
    <property type="entry name" value="AMINOTRANSFERASE CLASS III"/>
    <property type="match status" value="1"/>
</dbReference>
<dbReference type="Pfam" id="PF00202">
    <property type="entry name" value="Aminotran_3"/>
    <property type="match status" value="1"/>
</dbReference>
<dbReference type="PIRSF" id="PIRSF000521">
    <property type="entry name" value="Transaminase_4ab_Lys_Orn"/>
    <property type="match status" value="1"/>
</dbReference>
<dbReference type="SUPFAM" id="SSF53383">
    <property type="entry name" value="PLP-dependent transferases"/>
    <property type="match status" value="1"/>
</dbReference>
<dbReference type="PROSITE" id="PS00600">
    <property type="entry name" value="AA_TRANSFER_CLASS_3"/>
    <property type="match status" value="1"/>
</dbReference>
<protein>
    <recommendedName>
        <fullName evidence="1">Acetylornithine aminotransferase</fullName>
        <shortName evidence="1">ACOAT</shortName>
        <ecNumber evidence="1">2.6.1.11</ecNumber>
    </recommendedName>
</protein>
<gene>
    <name evidence="1" type="primary">argD</name>
    <name type="ordered locus">RSc2435</name>
    <name type="ORF">RS02668</name>
</gene>